<sequence length="318" mass="36646">MSSNNQNTNNTSIELISENGPISLNLMMEEGVKALTRILSNQLNDTPGTQPMHFIIKKNDKDNKAIDINGDDEEVVELGNESNYHMSDGVQNEAEIILNDQLNDILKNHESQLRLDGEEAEIIFDYETQGTVDGSDSIGEKITQMIESVLPNGLGPNTTGKLQAVLNGKELNITEEIHKSDRIEEEEHIEGGLTTAEGNFEVEFETEPLPEDHKHTEENIDGHENYNDCCPHHHNNQDNRRRAPKYKNYNYHDYEYTVQHPKTEPNFSALINQKKPVCLFCEYYMVFGEPPKNMIKWYNMHYGYNHLPQRNDRHHRNR</sequence>
<protein>
    <recommendedName>
        <fullName>Protein IBD2</fullName>
    </recommendedName>
</protein>
<keyword id="KW-0131">Cell cycle</keyword>
<keyword id="KW-0132">Cell division</keyword>
<keyword id="KW-0963">Cytoplasm</keyword>
<keyword id="KW-0206">Cytoskeleton</keyword>
<keyword id="KW-0498">Mitosis</keyword>
<keyword id="KW-1185">Reference proteome</keyword>
<evidence type="ECO:0000250" key="1"/>
<evidence type="ECO:0000305" key="2"/>
<dbReference type="EMBL" id="CR380956">
    <property type="protein sequence ID" value="CAG60923.1"/>
    <property type="molecule type" value="Genomic_DNA"/>
</dbReference>
<dbReference type="RefSeq" id="XP_447972.1">
    <property type="nucleotide sequence ID" value="XM_447972.1"/>
</dbReference>
<dbReference type="FunCoup" id="Q6FP72">
    <property type="interactions" value="30"/>
</dbReference>
<dbReference type="EnsemblFungi" id="CAGL0J06116g-T">
    <property type="protein sequence ID" value="CAGL0J06116g-T-p1"/>
    <property type="gene ID" value="CAGL0J06116g"/>
</dbReference>
<dbReference type="KEGG" id="cgr:2889781"/>
<dbReference type="CGD" id="CAL0132912">
    <property type="gene designation" value="CAGL0J06116g"/>
</dbReference>
<dbReference type="VEuPathDB" id="FungiDB:B1J91_J06116g"/>
<dbReference type="VEuPathDB" id="FungiDB:CAGL0J06116g"/>
<dbReference type="eggNOG" id="ENOG502RXXW">
    <property type="taxonomic scope" value="Eukaryota"/>
</dbReference>
<dbReference type="HOGENOM" id="CLU_067888_0_0_1"/>
<dbReference type="InParanoid" id="Q6FP72"/>
<dbReference type="OMA" id="PKNMIKW"/>
<dbReference type="Proteomes" id="UP000002428">
    <property type="component" value="Chromosome J"/>
</dbReference>
<dbReference type="GO" id="GO:0005737">
    <property type="term" value="C:cytoplasm"/>
    <property type="evidence" value="ECO:0007669"/>
    <property type="project" value="UniProtKB-KW"/>
</dbReference>
<dbReference type="GO" id="GO:0000922">
    <property type="term" value="C:spindle pole"/>
    <property type="evidence" value="ECO:0007669"/>
    <property type="project" value="UniProtKB-SubCell"/>
</dbReference>
<dbReference type="GO" id="GO:0051301">
    <property type="term" value="P:cell division"/>
    <property type="evidence" value="ECO:0007669"/>
    <property type="project" value="UniProtKB-KW"/>
</dbReference>
<dbReference type="GO" id="GO:0007094">
    <property type="term" value="P:mitotic spindle assembly checkpoint signaling"/>
    <property type="evidence" value="ECO:0007669"/>
    <property type="project" value="EnsemblFungi"/>
</dbReference>
<dbReference type="InterPro" id="IPR026231">
    <property type="entry name" value="IBD2"/>
</dbReference>
<dbReference type="PRINTS" id="PR02099">
    <property type="entry name" value="PROTEINIBD2"/>
</dbReference>
<reference key="1">
    <citation type="journal article" date="2004" name="Nature">
        <title>Genome evolution in yeasts.</title>
        <authorList>
            <person name="Dujon B."/>
            <person name="Sherman D."/>
            <person name="Fischer G."/>
            <person name="Durrens P."/>
            <person name="Casaregola S."/>
            <person name="Lafontaine I."/>
            <person name="de Montigny J."/>
            <person name="Marck C."/>
            <person name="Neuveglise C."/>
            <person name="Talla E."/>
            <person name="Goffard N."/>
            <person name="Frangeul L."/>
            <person name="Aigle M."/>
            <person name="Anthouard V."/>
            <person name="Babour A."/>
            <person name="Barbe V."/>
            <person name="Barnay S."/>
            <person name="Blanchin S."/>
            <person name="Beckerich J.-M."/>
            <person name="Beyne E."/>
            <person name="Bleykasten C."/>
            <person name="Boisrame A."/>
            <person name="Boyer J."/>
            <person name="Cattolico L."/>
            <person name="Confanioleri F."/>
            <person name="de Daruvar A."/>
            <person name="Despons L."/>
            <person name="Fabre E."/>
            <person name="Fairhead C."/>
            <person name="Ferry-Dumazet H."/>
            <person name="Groppi A."/>
            <person name="Hantraye F."/>
            <person name="Hennequin C."/>
            <person name="Jauniaux N."/>
            <person name="Joyet P."/>
            <person name="Kachouri R."/>
            <person name="Kerrest A."/>
            <person name="Koszul R."/>
            <person name="Lemaire M."/>
            <person name="Lesur I."/>
            <person name="Ma L."/>
            <person name="Muller H."/>
            <person name="Nicaud J.-M."/>
            <person name="Nikolski M."/>
            <person name="Oztas S."/>
            <person name="Ozier-Kalogeropoulos O."/>
            <person name="Pellenz S."/>
            <person name="Potier S."/>
            <person name="Richard G.-F."/>
            <person name="Straub M.-L."/>
            <person name="Suleau A."/>
            <person name="Swennen D."/>
            <person name="Tekaia F."/>
            <person name="Wesolowski-Louvel M."/>
            <person name="Westhof E."/>
            <person name="Wirth B."/>
            <person name="Zeniou-Meyer M."/>
            <person name="Zivanovic Y."/>
            <person name="Bolotin-Fukuhara M."/>
            <person name="Thierry A."/>
            <person name="Bouchier C."/>
            <person name="Caudron B."/>
            <person name="Scarpelli C."/>
            <person name="Gaillardin C."/>
            <person name="Weissenbach J."/>
            <person name="Wincker P."/>
            <person name="Souciet J.-L."/>
        </authorList>
    </citation>
    <scope>NUCLEOTIDE SEQUENCE [LARGE SCALE GENOMIC DNA]</scope>
    <source>
        <strain>ATCC 2001 / BCRC 20586 / JCM 3761 / NBRC 0622 / NRRL Y-65 / CBS 138</strain>
    </source>
</reference>
<accession>Q6FP72</accession>
<gene>
    <name type="primary">IBD2</name>
    <name type="ordered locus">CAGL0J06116g</name>
</gene>
<feature type="chain" id="PRO_0000333335" description="Protein IBD2">
    <location>
        <begin position="1"/>
        <end position="318"/>
    </location>
</feature>
<comment type="function">
    <text evidence="1">Part of a checkpoint which monitors spindle integrity and prevents premature exit from mitosis.</text>
</comment>
<comment type="subcellular location">
    <subcellularLocation>
        <location evidence="1">Cytoplasm</location>
        <location evidence="1">Cytoskeleton</location>
        <location evidence="1">Spindle pole</location>
    </subcellularLocation>
</comment>
<comment type="similarity">
    <text evidence="2">Belongs to the IBD2 family.</text>
</comment>
<proteinExistence type="inferred from homology"/>
<name>IBD2_CANGA</name>
<organism>
    <name type="scientific">Candida glabrata (strain ATCC 2001 / BCRC 20586 / JCM 3761 / NBRC 0622 / NRRL Y-65 / CBS 138)</name>
    <name type="common">Yeast</name>
    <name type="synonym">Nakaseomyces glabratus</name>
    <dbReference type="NCBI Taxonomy" id="284593"/>
    <lineage>
        <taxon>Eukaryota</taxon>
        <taxon>Fungi</taxon>
        <taxon>Dikarya</taxon>
        <taxon>Ascomycota</taxon>
        <taxon>Saccharomycotina</taxon>
        <taxon>Saccharomycetes</taxon>
        <taxon>Saccharomycetales</taxon>
        <taxon>Saccharomycetaceae</taxon>
        <taxon>Nakaseomyces</taxon>
    </lineage>
</organism>